<comment type="similarity">
    <text evidence="1">Belongs to the bacterial ribosomal protein bL33 family.</text>
</comment>
<proteinExistence type="inferred from homology"/>
<accession>B0C2J4</accession>
<sequence length="62" mass="7207">MAKGVRIIVTLECTECRSNSNKRSPGVSRYTTTKNRRNTTSRLELKKFCTHCNKHTNHKEIK</sequence>
<reference key="1">
    <citation type="journal article" date="2008" name="Proc. Natl. Acad. Sci. U.S.A.">
        <title>Niche adaptation and genome expansion in the chlorophyll d-producing cyanobacterium Acaryochloris marina.</title>
        <authorList>
            <person name="Swingley W.D."/>
            <person name="Chen M."/>
            <person name="Cheung P.C."/>
            <person name="Conrad A.L."/>
            <person name="Dejesa L.C."/>
            <person name="Hao J."/>
            <person name="Honchak B.M."/>
            <person name="Karbach L.E."/>
            <person name="Kurdoglu A."/>
            <person name="Lahiri S."/>
            <person name="Mastrian S.D."/>
            <person name="Miyashita H."/>
            <person name="Page L."/>
            <person name="Ramakrishna P."/>
            <person name="Satoh S."/>
            <person name="Sattley W.M."/>
            <person name="Shimada Y."/>
            <person name="Taylor H.L."/>
            <person name="Tomo T."/>
            <person name="Tsuchiya T."/>
            <person name="Wang Z.T."/>
            <person name="Raymond J."/>
            <person name="Mimuro M."/>
            <person name="Blankenship R.E."/>
            <person name="Touchman J.W."/>
        </authorList>
    </citation>
    <scope>NUCLEOTIDE SEQUENCE [LARGE SCALE GENOMIC DNA]</scope>
    <source>
        <strain>MBIC 11017</strain>
    </source>
</reference>
<keyword id="KW-1185">Reference proteome</keyword>
<keyword id="KW-0687">Ribonucleoprotein</keyword>
<keyword id="KW-0689">Ribosomal protein</keyword>
<protein>
    <recommendedName>
        <fullName evidence="1">Large ribosomal subunit protein bL33</fullName>
    </recommendedName>
    <alternativeName>
        <fullName evidence="2">50S ribosomal protein L33</fullName>
    </alternativeName>
</protein>
<feature type="chain" id="PRO_0000356355" description="Large ribosomal subunit protein bL33">
    <location>
        <begin position="1"/>
        <end position="62"/>
    </location>
</feature>
<gene>
    <name evidence="1" type="primary">rpmG</name>
    <name evidence="1" type="synonym">rpl33</name>
    <name type="ordered locus">AM1_4813</name>
</gene>
<evidence type="ECO:0000255" key="1">
    <source>
        <dbReference type="HAMAP-Rule" id="MF_00294"/>
    </source>
</evidence>
<evidence type="ECO:0000305" key="2"/>
<dbReference type="EMBL" id="CP000828">
    <property type="protein sequence ID" value="ABW29784.1"/>
    <property type="molecule type" value="Genomic_DNA"/>
</dbReference>
<dbReference type="RefSeq" id="WP_010480755.1">
    <property type="nucleotide sequence ID" value="NC_009925.1"/>
</dbReference>
<dbReference type="SMR" id="B0C2J4"/>
<dbReference type="STRING" id="329726.AM1_4813"/>
<dbReference type="KEGG" id="amr:AM1_4813"/>
<dbReference type="eggNOG" id="COG0267">
    <property type="taxonomic scope" value="Bacteria"/>
</dbReference>
<dbReference type="HOGENOM" id="CLU_190949_3_0_3"/>
<dbReference type="Proteomes" id="UP000000268">
    <property type="component" value="Chromosome"/>
</dbReference>
<dbReference type="GO" id="GO:0005737">
    <property type="term" value="C:cytoplasm"/>
    <property type="evidence" value="ECO:0007669"/>
    <property type="project" value="UniProtKB-ARBA"/>
</dbReference>
<dbReference type="GO" id="GO:1990904">
    <property type="term" value="C:ribonucleoprotein complex"/>
    <property type="evidence" value="ECO:0007669"/>
    <property type="project" value="UniProtKB-KW"/>
</dbReference>
<dbReference type="GO" id="GO:0005840">
    <property type="term" value="C:ribosome"/>
    <property type="evidence" value="ECO:0007669"/>
    <property type="project" value="UniProtKB-KW"/>
</dbReference>
<dbReference type="GO" id="GO:0003735">
    <property type="term" value="F:structural constituent of ribosome"/>
    <property type="evidence" value="ECO:0007669"/>
    <property type="project" value="InterPro"/>
</dbReference>
<dbReference type="GO" id="GO:0006412">
    <property type="term" value="P:translation"/>
    <property type="evidence" value="ECO:0007669"/>
    <property type="project" value="UniProtKB-UniRule"/>
</dbReference>
<dbReference type="Gene3D" id="2.20.28.120">
    <property type="entry name" value="Ribosomal protein L33"/>
    <property type="match status" value="1"/>
</dbReference>
<dbReference type="HAMAP" id="MF_00294">
    <property type="entry name" value="Ribosomal_bL33"/>
    <property type="match status" value="1"/>
</dbReference>
<dbReference type="InterPro" id="IPR001705">
    <property type="entry name" value="Ribosomal_bL33"/>
</dbReference>
<dbReference type="InterPro" id="IPR018264">
    <property type="entry name" value="Ribosomal_bL33_CS"/>
</dbReference>
<dbReference type="InterPro" id="IPR038584">
    <property type="entry name" value="Ribosomal_bL33_sf"/>
</dbReference>
<dbReference type="InterPro" id="IPR011332">
    <property type="entry name" value="Ribosomal_zn-bd"/>
</dbReference>
<dbReference type="NCBIfam" id="NF001764">
    <property type="entry name" value="PRK00504.1"/>
    <property type="match status" value="1"/>
</dbReference>
<dbReference type="NCBIfam" id="NF001860">
    <property type="entry name" value="PRK00595.1"/>
    <property type="match status" value="1"/>
</dbReference>
<dbReference type="NCBIfam" id="TIGR01023">
    <property type="entry name" value="rpmG_bact"/>
    <property type="match status" value="1"/>
</dbReference>
<dbReference type="PANTHER" id="PTHR43168">
    <property type="entry name" value="50S RIBOSOMAL PROTEIN L33, CHLOROPLASTIC"/>
    <property type="match status" value="1"/>
</dbReference>
<dbReference type="PANTHER" id="PTHR43168:SF2">
    <property type="entry name" value="LARGE RIBOSOMAL SUBUNIT PROTEIN BL33C"/>
    <property type="match status" value="1"/>
</dbReference>
<dbReference type="Pfam" id="PF00471">
    <property type="entry name" value="Ribosomal_L33"/>
    <property type="match status" value="1"/>
</dbReference>
<dbReference type="SUPFAM" id="SSF57829">
    <property type="entry name" value="Zn-binding ribosomal proteins"/>
    <property type="match status" value="1"/>
</dbReference>
<dbReference type="PROSITE" id="PS00582">
    <property type="entry name" value="RIBOSOMAL_L33"/>
    <property type="match status" value="1"/>
</dbReference>
<name>RL33_ACAM1</name>
<organism>
    <name type="scientific">Acaryochloris marina (strain MBIC 11017)</name>
    <dbReference type="NCBI Taxonomy" id="329726"/>
    <lineage>
        <taxon>Bacteria</taxon>
        <taxon>Bacillati</taxon>
        <taxon>Cyanobacteriota</taxon>
        <taxon>Cyanophyceae</taxon>
        <taxon>Acaryochloridales</taxon>
        <taxon>Acaryochloridaceae</taxon>
        <taxon>Acaryochloris</taxon>
    </lineage>
</organism>